<proteinExistence type="inferred from homology"/>
<evidence type="ECO:0000255" key="1">
    <source>
        <dbReference type="HAMAP-Rule" id="MF_01395"/>
    </source>
</evidence>
<evidence type="ECO:0000255" key="2">
    <source>
        <dbReference type="PROSITE-ProRule" id="PRU01136"/>
    </source>
</evidence>
<evidence type="ECO:0000256" key="3">
    <source>
        <dbReference type="SAM" id="MobiDB-lite"/>
    </source>
</evidence>
<dbReference type="EC" id="2.1.3.15" evidence="1"/>
<dbReference type="EMBL" id="CP000747">
    <property type="protein sequence ID" value="ACG76611.1"/>
    <property type="molecule type" value="Genomic_DNA"/>
</dbReference>
<dbReference type="RefSeq" id="WP_012520759.1">
    <property type="nucleotide sequence ID" value="NC_011144.1"/>
</dbReference>
<dbReference type="SMR" id="B4RCL2"/>
<dbReference type="STRING" id="450851.PHZ_c0197"/>
<dbReference type="KEGG" id="pzu:PHZ_c0197"/>
<dbReference type="eggNOG" id="COG0777">
    <property type="taxonomic scope" value="Bacteria"/>
</dbReference>
<dbReference type="HOGENOM" id="CLU_015486_1_0_5"/>
<dbReference type="OrthoDB" id="9772975at2"/>
<dbReference type="UniPathway" id="UPA00655">
    <property type="reaction ID" value="UER00711"/>
</dbReference>
<dbReference type="Proteomes" id="UP000001868">
    <property type="component" value="Chromosome"/>
</dbReference>
<dbReference type="GO" id="GO:0009329">
    <property type="term" value="C:acetate CoA-transferase complex"/>
    <property type="evidence" value="ECO:0007669"/>
    <property type="project" value="TreeGrafter"/>
</dbReference>
<dbReference type="GO" id="GO:0003989">
    <property type="term" value="F:acetyl-CoA carboxylase activity"/>
    <property type="evidence" value="ECO:0007669"/>
    <property type="project" value="InterPro"/>
</dbReference>
<dbReference type="GO" id="GO:0005524">
    <property type="term" value="F:ATP binding"/>
    <property type="evidence" value="ECO:0007669"/>
    <property type="project" value="UniProtKB-KW"/>
</dbReference>
<dbReference type="GO" id="GO:0016743">
    <property type="term" value="F:carboxyl- or carbamoyltransferase activity"/>
    <property type="evidence" value="ECO:0007669"/>
    <property type="project" value="UniProtKB-UniRule"/>
</dbReference>
<dbReference type="GO" id="GO:0006633">
    <property type="term" value="P:fatty acid biosynthetic process"/>
    <property type="evidence" value="ECO:0007669"/>
    <property type="project" value="UniProtKB-KW"/>
</dbReference>
<dbReference type="GO" id="GO:2001295">
    <property type="term" value="P:malonyl-CoA biosynthetic process"/>
    <property type="evidence" value="ECO:0007669"/>
    <property type="project" value="UniProtKB-UniRule"/>
</dbReference>
<dbReference type="Gene3D" id="3.90.226.10">
    <property type="entry name" value="2-enoyl-CoA Hydratase, Chain A, domain 1"/>
    <property type="match status" value="1"/>
</dbReference>
<dbReference type="HAMAP" id="MF_01395">
    <property type="entry name" value="AcetylCoA_CT_beta"/>
    <property type="match status" value="1"/>
</dbReference>
<dbReference type="InterPro" id="IPR034733">
    <property type="entry name" value="AcCoA_carboxyl_beta"/>
</dbReference>
<dbReference type="InterPro" id="IPR000438">
    <property type="entry name" value="Acetyl_CoA_COase_Trfase_b_su"/>
</dbReference>
<dbReference type="InterPro" id="IPR029045">
    <property type="entry name" value="ClpP/crotonase-like_dom_sf"/>
</dbReference>
<dbReference type="InterPro" id="IPR011762">
    <property type="entry name" value="COA_CT_N"/>
</dbReference>
<dbReference type="NCBIfam" id="TIGR00515">
    <property type="entry name" value="accD"/>
    <property type="match status" value="1"/>
</dbReference>
<dbReference type="PANTHER" id="PTHR42995">
    <property type="entry name" value="ACETYL-COENZYME A CARBOXYLASE CARBOXYL TRANSFERASE SUBUNIT BETA, CHLOROPLASTIC"/>
    <property type="match status" value="1"/>
</dbReference>
<dbReference type="PANTHER" id="PTHR42995:SF5">
    <property type="entry name" value="ACETYL-COENZYME A CARBOXYLASE CARBOXYL TRANSFERASE SUBUNIT BETA, CHLOROPLASTIC"/>
    <property type="match status" value="1"/>
</dbReference>
<dbReference type="Pfam" id="PF01039">
    <property type="entry name" value="Carboxyl_trans"/>
    <property type="match status" value="1"/>
</dbReference>
<dbReference type="PRINTS" id="PR01070">
    <property type="entry name" value="ACCCTRFRASEB"/>
</dbReference>
<dbReference type="SUPFAM" id="SSF52096">
    <property type="entry name" value="ClpP/crotonase"/>
    <property type="match status" value="1"/>
</dbReference>
<dbReference type="PROSITE" id="PS50980">
    <property type="entry name" value="COA_CT_NTER"/>
    <property type="match status" value="1"/>
</dbReference>
<name>ACCD_PHEZH</name>
<reference key="1">
    <citation type="journal article" date="2008" name="BMC Genomics">
        <title>Complete genome of Phenylobacterium zucineum - a novel facultative intracellular bacterium isolated from human erythroleukemia cell line K562.</title>
        <authorList>
            <person name="Luo Y."/>
            <person name="Xu X."/>
            <person name="Ding Z."/>
            <person name="Liu Z."/>
            <person name="Zhang B."/>
            <person name="Yan Z."/>
            <person name="Sun J."/>
            <person name="Hu S."/>
            <person name="Hu X."/>
        </authorList>
    </citation>
    <scope>NUCLEOTIDE SEQUENCE [LARGE SCALE GENOMIC DNA]</scope>
    <source>
        <strain>HLK1</strain>
    </source>
</reference>
<feature type="chain" id="PRO_0000389818" description="Acetyl-coenzyme A carboxylase carboxyl transferase subunit beta">
    <location>
        <begin position="1"/>
        <end position="307"/>
    </location>
</feature>
<feature type="domain" description="CoA carboxyltransferase N-terminal" evidence="2">
    <location>
        <begin position="43"/>
        <end position="307"/>
    </location>
</feature>
<feature type="region of interest" description="Disordered" evidence="3">
    <location>
        <begin position="1"/>
        <end position="21"/>
    </location>
</feature>
<organism>
    <name type="scientific">Phenylobacterium zucineum (strain HLK1)</name>
    <dbReference type="NCBI Taxonomy" id="450851"/>
    <lineage>
        <taxon>Bacteria</taxon>
        <taxon>Pseudomonadati</taxon>
        <taxon>Pseudomonadota</taxon>
        <taxon>Alphaproteobacteria</taxon>
        <taxon>Caulobacterales</taxon>
        <taxon>Caulobacteraceae</taxon>
        <taxon>Phenylobacterium</taxon>
    </lineage>
</organism>
<gene>
    <name evidence="1" type="primary">accD</name>
    <name type="ordered locus">PHZ_c0197</name>
</gene>
<comment type="function">
    <text evidence="1">Component of the acetyl coenzyme A carboxylase (ACC) complex. Biotin carboxylase (BC) catalyzes the carboxylation of biotin on its carrier protein (BCCP) and then the CO(2) group is transferred by the transcarboxylase to acetyl-CoA to form malonyl-CoA.</text>
</comment>
<comment type="catalytic activity">
    <reaction evidence="1">
        <text>N(6)-carboxybiotinyl-L-lysyl-[protein] + acetyl-CoA = N(6)-biotinyl-L-lysyl-[protein] + malonyl-CoA</text>
        <dbReference type="Rhea" id="RHEA:54728"/>
        <dbReference type="Rhea" id="RHEA-COMP:10505"/>
        <dbReference type="Rhea" id="RHEA-COMP:10506"/>
        <dbReference type="ChEBI" id="CHEBI:57288"/>
        <dbReference type="ChEBI" id="CHEBI:57384"/>
        <dbReference type="ChEBI" id="CHEBI:83144"/>
        <dbReference type="ChEBI" id="CHEBI:83145"/>
        <dbReference type="EC" id="2.1.3.15"/>
    </reaction>
</comment>
<comment type="pathway">
    <text evidence="1">Lipid metabolism; malonyl-CoA biosynthesis; malonyl-CoA from acetyl-CoA: step 1/1.</text>
</comment>
<comment type="subunit">
    <text evidence="1">Acetyl-CoA carboxylase is a heterohexamer composed of biotin carboxyl carrier protein (AccB), biotin carboxylase (AccC) and two subunits each of ACCase subunit alpha (AccA) and ACCase subunit beta (AccD).</text>
</comment>
<comment type="subcellular location">
    <subcellularLocation>
        <location evidence="1">Cytoplasm</location>
    </subcellularLocation>
</comment>
<comment type="similarity">
    <text evidence="1">Belongs to the AccD/PCCB family.</text>
</comment>
<protein>
    <recommendedName>
        <fullName evidence="1">Acetyl-coenzyme A carboxylase carboxyl transferase subunit beta</fullName>
        <shortName evidence="1">ACCase subunit beta</shortName>
        <shortName evidence="1">Acetyl-CoA carboxylase carboxyltransferase subunit beta</shortName>
        <ecNumber evidence="1">2.1.3.15</ecNumber>
    </recommendedName>
</protein>
<keyword id="KW-0067">ATP-binding</keyword>
<keyword id="KW-0963">Cytoplasm</keyword>
<keyword id="KW-0275">Fatty acid biosynthesis</keyword>
<keyword id="KW-0276">Fatty acid metabolism</keyword>
<keyword id="KW-0444">Lipid biosynthesis</keyword>
<keyword id="KW-0443">Lipid metabolism</keyword>
<keyword id="KW-0547">Nucleotide-binding</keyword>
<keyword id="KW-1185">Reference proteome</keyword>
<keyword id="KW-0808">Transferase</keyword>
<accession>B4RCL2</accession>
<sequence length="307" mass="33585">MAMADQRNDKPGRPAAQRERRGWLSRIAPGVRNFAKRETPENLWVKCPETGEMIYRPDLEAALWVTPSGHHMRIGASQRLAVTFDDGQFEKIDCPQVVEDPHKFPDDRAYPDRLKAARKQTGEQDSIAAAYGHIRGQPAVVMVQDFAFMGGSLGMGAGEAFIAAAKEAVKRQVPLVIFTASGGARMQEGTLSLMQMARTTLALNEVKDAGLPYVVVLTDPTTGGVLASYAMLGDVHLAEPNATIGFSGRRVIEQTIRETLPPGFQKSEFLVERGMIDQVVRRADLPEVLGSVLKTLMMGRERLSPAA</sequence>